<accession>O29849</accession>
<reference key="1">
    <citation type="journal article" date="1997" name="Nature">
        <title>The complete genome sequence of the hyperthermophilic, sulphate-reducing archaeon Archaeoglobus fulgidus.</title>
        <authorList>
            <person name="Klenk H.-P."/>
            <person name="Clayton R.A."/>
            <person name="Tomb J.-F."/>
            <person name="White O."/>
            <person name="Nelson K.E."/>
            <person name="Ketchum K.A."/>
            <person name="Dodson R.J."/>
            <person name="Gwinn M.L."/>
            <person name="Hickey E.K."/>
            <person name="Peterson J.D."/>
            <person name="Richardson D.L."/>
            <person name="Kerlavage A.R."/>
            <person name="Graham D.E."/>
            <person name="Kyrpides N.C."/>
            <person name="Fleischmann R.D."/>
            <person name="Quackenbush J."/>
            <person name="Lee N.H."/>
            <person name="Sutton G.G."/>
            <person name="Gill S.R."/>
            <person name="Kirkness E.F."/>
            <person name="Dougherty B.A."/>
            <person name="McKenney K."/>
            <person name="Adams M.D."/>
            <person name="Loftus B.J."/>
            <person name="Peterson S.N."/>
            <person name="Reich C.I."/>
            <person name="McNeil L.K."/>
            <person name="Badger J.H."/>
            <person name="Glodek A."/>
            <person name="Zhou L."/>
            <person name="Overbeek R."/>
            <person name="Gocayne J.D."/>
            <person name="Weidman J.F."/>
            <person name="McDonald L.A."/>
            <person name="Utterback T.R."/>
            <person name="Cotton M.D."/>
            <person name="Spriggs T."/>
            <person name="Artiach P."/>
            <person name="Kaine B.P."/>
            <person name="Sykes S.M."/>
            <person name="Sadow P.W."/>
            <person name="D'Andrea K.P."/>
            <person name="Bowman C."/>
            <person name="Fujii C."/>
            <person name="Garland S.A."/>
            <person name="Mason T.M."/>
            <person name="Olsen G.J."/>
            <person name="Fraser C.M."/>
            <person name="Smith H.O."/>
            <person name="Woese C.R."/>
            <person name="Venter J.C."/>
        </authorList>
    </citation>
    <scope>NUCLEOTIDE SEQUENCE [LARGE SCALE GENOMIC DNA]</scope>
    <source>
        <strain>ATCC 49558 / DSM 4304 / JCM 9628 / NBRC 100126 / VC-16</strain>
    </source>
</reference>
<name>Y398_ARCFU</name>
<organism>
    <name type="scientific">Archaeoglobus fulgidus (strain ATCC 49558 / DSM 4304 / JCM 9628 / NBRC 100126 / VC-16)</name>
    <dbReference type="NCBI Taxonomy" id="224325"/>
    <lineage>
        <taxon>Archaea</taxon>
        <taxon>Methanobacteriati</taxon>
        <taxon>Methanobacteriota</taxon>
        <taxon>Archaeoglobi</taxon>
        <taxon>Archaeoglobales</taxon>
        <taxon>Archaeoglobaceae</taxon>
        <taxon>Archaeoglobus</taxon>
    </lineage>
</organism>
<keyword id="KW-1185">Reference proteome</keyword>
<dbReference type="EMBL" id="AE000782">
    <property type="protein sequence ID" value="AAB90849.1"/>
    <property type="molecule type" value="Genomic_DNA"/>
</dbReference>
<dbReference type="PIR" id="F69299">
    <property type="entry name" value="F69299"/>
</dbReference>
<dbReference type="RefSeq" id="WP_010877905.1">
    <property type="nucleotide sequence ID" value="NC_000917.1"/>
</dbReference>
<dbReference type="STRING" id="224325.AF_0398"/>
<dbReference type="PaxDb" id="224325-AF_0398"/>
<dbReference type="DNASU" id="1483613"/>
<dbReference type="EnsemblBacteria" id="AAB90849">
    <property type="protein sequence ID" value="AAB90849"/>
    <property type="gene ID" value="AF_0398"/>
</dbReference>
<dbReference type="KEGG" id="afu:AF_0398"/>
<dbReference type="HOGENOM" id="CLU_1801581_0_0_2"/>
<dbReference type="Proteomes" id="UP000002199">
    <property type="component" value="Chromosome"/>
</dbReference>
<feature type="chain" id="PRO_0000127868" description="Uncharacterized protein AF_0398">
    <location>
        <begin position="1"/>
        <end position="143"/>
    </location>
</feature>
<proteinExistence type="predicted"/>
<gene>
    <name type="ordered locus">AF_0398</name>
</gene>
<sequence>MIFDVYSNYYSRHISRPSIGLGIGLVSSITSPIDFGFSASASAENTVKCSWYKETEQGFAKGLRLEYNDIYAMKPGDRIATYFHVYTEEDLNSANPVWYPMKAKILRIPVYEYSSTSPNAHITDVGSDYPIYAWIEHVDDEHR</sequence>
<protein>
    <recommendedName>
        <fullName>Uncharacterized protein AF_0398</fullName>
    </recommendedName>
</protein>